<proteinExistence type="inferred from homology"/>
<sequence length="230" mass="26229">MVPEYSRFYNILGYNFKDYTLLIRALTHRSKTKKNYERLEFLGDSVLSFVIAEVLYKQFTDLAEGKLSQLRSKLVKGTTLAQLASSLKMDEYIILGASEQGGHKREKILEDVFEAVIGAIYLDSDFATVKKVILKWYQPIISSINLDTIKVKDSKSKLQEILLQNALSLPEYSIETIDGKDHEQQFTVVAMSKDLNLRVKAQGTSRKKAEQKAAEKMIEMLSQQGLHEKK</sequence>
<evidence type="ECO:0000250" key="1"/>
<evidence type="ECO:0000255" key="2">
    <source>
        <dbReference type="HAMAP-Rule" id="MF_00104"/>
    </source>
</evidence>
<evidence type="ECO:0000269" key="3">
    <source>
    </source>
</evidence>
<evidence type="ECO:0000305" key="4"/>
<accession>A0Q7W6</accession>
<organism>
    <name type="scientific">Francisella tularensis subsp. novicida (strain U112)</name>
    <dbReference type="NCBI Taxonomy" id="401614"/>
    <lineage>
        <taxon>Bacteria</taxon>
        <taxon>Pseudomonadati</taxon>
        <taxon>Pseudomonadota</taxon>
        <taxon>Gammaproteobacteria</taxon>
        <taxon>Thiotrichales</taxon>
        <taxon>Francisellaceae</taxon>
        <taxon>Francisella</taxon>
    </lineage>
</organism>
<reference key="1">
    <citation type="journal article" date="2007" name="Genome Biol.">
        <title>Comparison of Francisella tularensis genomes reveals evolutionary events associated with the emergence of human pathogenic strains.</title>
        <authorList>
            <person name="Rohmer L."/>
            <person name="Fong C."/>
            <person name="Abmayr S."/>
            <person name="Wasnick M."/>
            <person name="Larson Freeman T.J."/>
            <person name="Radey M."/>
            <person name="Guina T."/>
            <person name="Svensson K."/>
            <person name="Hayden H.S."/>
            <person name="Jacobs M."/>
            <person name="Gallagher L.A."/>
            <person name="Manoil C."/>
            <person name="Ernst R.K."/>
            <person name="Drees B."/>
            <person name="Buckley D."/>
            <person name="Haugen E."/>
            <person name="Bovee D."/>
            <person name="Zhou Y."/>
            <person name="Chang J."/>
            <person name="Levy R."/>
            <person name="Lim R."/>
            <person name="Gillett W."/>
            <person name="Guenthener D."/>
            <person name="Kang A."/>
            <person name="Shaffer S.A."/>
            <person name="Taylor G."/>
            <person name="Chen J."/>
            <person name="Gallis B."/>
            <person name="D'Argenio D.A."/>
            <person name="Forsman M."/>
            <person name="Olson M.V."/>
            <person name="Goodlett D.R."/>
            <person name="Kaul R."/>
            <person name="Miller S.I."/>
            <person name="Brittnacher M.J."/>
        </authorList>
    </citation>
    <scope>NUCLEOTIDE SEQUENCE [LARGE SCALE GENOMIC DNA]</scope>
    <source>
        <strain>U112</strain>
    </source>
</reference>
<reference key="2">
    <citation type="journal article" date="2014" name="Nucleic Acids Res.">
        <title>Phylogeny of Cas9 determines functional exchangeability of dual-RNA and Cas9 among orthologous type II CRISPR-Cas systems.</title>
        <authorList>
            <person name="Fonfara I."/>
            <person name="Le Rhun A."/>
            <person name="Chylinski K."/>
            <person name="Makarova K.S."/>
            <person name="Lecrivain A.L."/>
            <person name="Bzdrenga J."/>
            <person name="Koonin E.V."/>
            <person name="Charpentier E."/>
        </authorList>
    </citation>
    <scope>FUNCTION</scope>
    <source>
        <strain>U112</strain>
    </source>
</reference>
<name>RNC_FRATN</name>
<protein>
    <recommendedName>
        <fullName evidence="2">Ribonuclease 3</fullName>
        <ecNumber evidence="2">3.1.26.3</ecNumber>
    </recommendedName>
    <alternativeName>
        <fullName evidence="2">Ribonuclease III</fullName>
        <shortName evidence="2">RNase III</shortName>
    </alternativeName>
</protein>
<comment type="function">
    <text evidence="1">Digests double-stranded RNA. Involved in the processing of primary rRNA transcript to yield the immediate precursors to the large and small rRNAs (23S and 16S). Also processes some mRNAs, and tRNAs when they are encoded in the rRNA operon (By similarity).</text>
</comment>
<comment type="function">
    <text evidence="3 4">CRISPR (clustered regularly interspaced short palindromic repeat) is an adaptive immune system that provides protection against mobile genetic elements (viruses, transposable elements and conjugative plasmids). CRISPR clusters contain spacers, sequences complementary to antecedent mobile elements, and target invading nucleic acids. CRISPR clusters are transcribed and processed into CRISPR RNA (crRNA). In this organism endogenous ribonuclease 3 and Cas9 are required for correct coprocessing of pre-crRNA and the trans-encoded small RNA (tracrRNA). Cas9, crRNA and tracrRNA are required for cleavage of invading DNA (Probable). Complements pre-crRNA and tracrRNA coprocessing defects in an rnc deletion in S.pyogenes strain 370 (PubMed:24270795).</text>
</comment>
<comment type="catalytic activity">
    <reaction evidence="2">
        <text>Endonucleolytic cleavage to 5'-phosphomonoester.</text>
        <dbReference type="EC" id="3.1.26.3"/>
    </reaction>
</comment>
<comment type="cofactor">
    <cofactor evidence="2">
        <name>Mg(2+)</name>
        <dbReference type="ChEBI" id="CHEBI:18420"/>
    </cofactor>
</comment>
<comment type="subunit">
    <text evidence="2">Homodimer.</text>
</comment>
<comment type="subcellular location">
    <subcellularLocation>
        <location evidence="2">Cytoplasm</location>
    </subcellularLocation>
</comment>
<comment type="similarity">
    <text evidence="2">Belongs to the ribonuclease III family.</text>
</comment>
<feature type="chain" id="PRO_1000075757" description="Ribonuclease 3">
    <location>
        <begin position="1"/>
        <end position="230"/>
    </location>
</feature>
<feature type="domain" description="RNase III" evidence="2">
    <location>
        <begin position="5"/>
        <end position="125"/>
    </location>
</feature>
<feature type="domain" description="DRBM" evidence="2">
    <location>
        <begin position="153"/>
        <end position="223"/>
    </location>
</feature>
<feature type="active site" evidence="2">
    <location>
        <position position="44"/>
    </location>
</feature>
<feature type="active site" evidence="2">
    <location>
        <position position="114"/>
    </location>
</feature>
<feature type="binding site" evidence="2">
    <location>
        <position position="40"/>
    </location>
    <ligand>
        <name>Mg(2+)</name>
        <dbReference type="ChEBI" id="CHEBI:18420"/>
    </ligand>
</feature>
<feature type="binding site" evidence="2">
    <location>
        <position position="111"/>
    </location>
    <ligand>
        <name>Mg(2+)</name>
        <dbReference type="ChEBI" id="CHEBI:18420"/>
    </ligand>
</feature>
<feature type="binding site" evidence="2">
    <location>
        <position position="114"/>
    </location>
    <ligand>
        <name>Mg(2+)</name>
        <dbReference type="ChEBI" id="CHEBI:18420"/>
    </ligand>
</feature>
<keyword id="KW-0963">Cytoplasm</keyword>
<keyword id="KW-0255">Endonuclease</keyword>
<keyword id="KW-0378">Hydrolase</keyword>
<keyword id="KW-0460">Magnesium</keyword>
<keyword id="KW-0479">Metal-binding</keyword>
<keyword id="KW-0507">mRNA processing</keyword>
<keyword id="KW-0540">Nuclease</keyword>
<keyword id="KW-0694">RNA-binding</keyword>
<keyword id="KW-0698">rRNA processing</keyword>
<keyword id="KW-0699">rRNA-binding</keyword>
<keyword id="KW-0819">tRNA processing</keyword>
<gene>
    <name evidence="2" type="primary">rnc</name>
    <name type="ordered locus">FTN_1463</name>
</gene>
<dbReference type="EC" id="3.1.26.3" evidence="2"/>
<dbReference type="EMBL" id="CP000439">
    <property type="protein sequence ID" value="ABK90331.1"/>
    <property type="molecule type" value="Genomic_DNA"/>
</dbReference>
<dbReference type="RefSeq" id="WP_003034807.1">
    <property type="nucleotide sequence ID" value="NZ_CP009633.1"/>
</dbReference>
<dbReference type="SMR" id="A0Q7W6"/>
<dbReference type="KEGG" id="ftn:FTN_1463"/>
<dbReference type="KEGG" id="ftx:AW25_538"/>
<dbReference type="BioCyc" id="FTUL401614:G1G75-1511-MONOMER"/>
<dbReference type="Proteomes" id="UP000000762">
    <property type="component" value="Chromosome"/>
</dbReference>
<dbReference type="GO" id="GO:0005737">
    <property type="term" value="C:cytoplasm"/>
    <property type="evidence" value="ECO:0007669"/>
    <property type="project" value="UniProtKB-SubCell"/>
</dbReference>
<dbReference type="GO" id="GO:0003725">
    <property type="term" value="F:double-stranded RNA binding"/>
    <property type="evidence" value="ECO:0007669"/>
    <property type="project" value="TreeGrafter"/>
</dbReference>
<dbReference type="GO" id="GO:0046872">
    <property type="term" value="F:metal ion binding"/>
    <property type="evidence" value="ECO:0007669"/>
    <property type="project" value="UniProtKB-KW"/>
</dbReference>
<dbReference type="GO" id="GO:0004525">
    <property type="term" value="F:ribonuclease III activity"/>
    <property type="evidence" value="ECO:0007669"/>
    <property type="project" value="UniProtKB-UniRule"/>
</dbReference>
<dbReference type="GO" id="GO:0019843">
    <property type="term" value="F:rRNA binding"/>
    <property type="evidence" value="ECO:0007669"/>
    <property type="project" value="UniProtKB-KW"/>
</dbReference>
<dbReference type="GO" id="GO:0006397">
    <property type="term" value="P:mRNA processing"/>
    <property type="evidence" value="ECO:0007669"/>
    <property type="project" value="UniProtKB-UniRule"/>
</dbReference>
<dbReference type="GO" id="GO:0010468">
    <property type="term" value="P:regulation of gene expression"/>
    <property type="evidence" value="ECO:0007669"/>
    <property type="project" value="TreeGrafter"/>
</dbReference>
<dbReference type="GO" id="GO:0006364">
    <property type="term" value="P:rRNA processing"/>
    <property type="evidence" value="ECO:0007669"/>
    <property type="project" value="UniProtKB-UniRule"/>
</dbReference>
<dbReference type="GO" id="GO:0008033">
    <property type="term" value="P:tRNA processing"/>
    <property type="evidence" value="ECO:0007669"/>
    <property type="project" value="UniProtKB-KW"/>
</dbReference>
<dbReference type="CDD" id="cd10845">
    <property type="entry name" value="DSRM_RNAse_III_family"/>
    <property type="match status" value="1"/>
</dbReference>
<dbReference type="CDD" id="cd00593">
    <property type="entry name" value="RIBOc"/>
    <property type="match status" value="1"/>
</dbReference>
<dbReference type="FunFam" id="1.10.1520.10:FF:000001">
    <property type="entry name" value="Ribonuclease 3"/>
    <property type="match status" value="1"/>
</dbReference>
<dbReference type="Gene3D" id="3.30.160.20">
    <property type="match status" value="1"/>
</dbReference>
<dbReference type="Gene3D" id="1.10.1520.10">
    <property type="entry name" value="Ribonuclease III domain"/>
    <property type="match status" value="1"/>
</dbReference>
<dbReference type="HAMAP" id="MF_00104">
    <property type="entry name" value="RNase_III"/>
    <property type="match status" value="1"/>
</dbReference>
<dbReference type="InterPro" id="IPR014720">
    <property type="entry name" value="dsRBD_dom"/>
</dbReference>
<dbReference type="InterPro" id="IPR011907">
    <property type="entry name" value="RNase_III"/>
</dbReference>
<dbReference type="InterPro" id="IPR000999">
    <property type="entry name" value="RNase_III_dom"/>
</dbReference>
<dbReference type="InterPro" id="IPR036389">
    <property type="entry name" value="RNase_III_sf"/>
</dbReference>
<dbReference type="NCBIfam" id="TIGR02191">
    <property type="entry name" value="RNaseIII"/>
    <property type="match status" value="1"/>
</dbReference>
<dbReference type="PANTHER" id="PTHR11207:SF0">
    <property type="entry name" value="RIBONUCLEASE 3"/>
    <property type="match status" value="1"/>
</dbReference>
<dbReference type="PANTHER" id="PTHR11207">
    <property type="entry name" value="RIBONUCLEASE III"/>
    <property type="match status" value="1"/>
</dbReference>
<dbReference type="Pfam" id="PF00035">
    <property type="entry name" value="dsrm"/>
    <property type="match status" value="1"/>
</dbReference>
<dbReference type="Pfam" id="PF14622">
    <property type="entry name" value="Ribonucleas_3_3"/>
    <property type="match status" value="1"/>
</dbReference>
<dbReference type="SMART" id="SM00358">
    <property type="entry name" value="DSRM"/>
    <property type="match status" value="1"/>
</dbReference>
<dbReference type="SMART" id="SM00535">
    <property type="entry name" value="RIBOc"/>
    <property type="match status" value="1"/>
</dbReference>
<dbReference type="SUPFAM" id="SSF54768">
    <property type="entry name" value="dsRNA-binding domain-like"/>
    <property type="match status" value="1"/>
</dbReference>
<dbReference type="SUPFAM" id="SSF69065">
    <property type="entry name" value="RNase III domain-like"/>
    <property type="match status" value="1"/>
</dbReference>
<dbReference type="PROSITE" id="PS50137">
    <property type="entry name" value="DS_RBD"/>
    <property type="match status" value="1"/>
</dbReference>
<dbReference type="PROSITE" id="PS00517">
    <property type="entry name" value="RNASE_3_1"/>
    <property type="match status" value="1"/>
</dbReference>
<dbReference type="PROSITE" id="PS50142">
    <property type="entry name" value="RNASE_3_2"/>
    <property type="match status" value="1"/>
</dbReference>